<sequence>MLKYVVTDIGKMCLYIWPYRVWSWRRLFIFRVLNVVSIAILFETPHRLALVLNVCLYTHISMCLYNCYCLYNVVTFSLNLILISMTFI</sequence>
<organism>
    <name type="scientific">Saccharomyces cerevisiae (strain ATCC 204508 / S288c)</name>
    <name type="common">Baker's yeast</name>
    <dbReference type="NCBI Taxonomy" id="559292"/>
    <lineage>
        <taxon>Eukaryota</taxon>
        <taxon>Fungi</taxon>
        <taxon>Dikarya</taxon>
        <taxon>Ascomycota</taxon>
        <taxon>Saccharomycotina</taxon>
        <taxon>Saccharomycetes</taxon>
        <taxon>Saccharomycetales</taxon>
        <taxon>Saccharomycetaceae</taxon>
        <taxon>Saccharomyces</taxon>
    </lineage>
</organism>
<reference key="1">
    <citation type="journal article" date="1992" name="Nature">
        <title>The complete DNA sequence of yeast chromosome III.</title>
        <authorList>
            <person name="Oliver S.G."/>
            <person name="van der Aart Q.J.M."/>
            <person name="Agostoni-Carbone M.L."/>
            <person name="Aigle M."/>
            <person name="Alberghina L."/>
            <person name="Alexandraki D."/>
            <person name="Antoine G."/>
            <person name="Anwar R."/>
            <person name="Ballesta J.P.G."/>
            <person name="Benit P."/>
            <person name="Berben G."/>
            <person name="Bergantino E."/>
            <person name="Biteau N."/>
            <person name="Bolle P.-A."/>
            <person name="Bolotin-Fukuhara M."/>
            <person name="Brown A."/>
            <person name="Brown A.J.P."/>
            <person name="Buhler J.-M."/>
            <person name="Carcano C."/>
            <person name="Carignani G."/>
            <person name="Cederberg H."/>
            <person name="Chanet R."/>
            <person name="Contreras R."/>
            <person name="Crouzet M."/>
            <person name="Daignan-Fornier B."/>
            <person name="Defoor E."/>
            <person name="Delgado M.D."/>
            <person name="Demolder J."/>
            <person name="Doira C."/>
            <person name="Dubois E."/>
            <person name="Dujon B."/>
            <person name="Duesterhoeft A."/>
            <person name="Erdmann D."/>
            <person name="Esteban M."/>
            <person name="Fabre F."/>
            <person name="Fairhead C."/>
            <person name="Faye G."/>
            <person name="Feldmann H."/>
            <person name="Fiers W."/>
            <person name="Francingues-Gaillard M.-C."/>
            <person name="Franco L."/>
            <person name="Frontali L."/>
            <person name="Fukuhara H."/>
            <person name="Fuller L.J."/>
            <person name="Galland P."/>
            <person name="Gent M.E."/>
            <person name="Gigot D."/>
            <person name="Gilliquet V."/>
            <person name="Glansdorff N."/>
            <person name="Goffeau A."/>
            <person name="Grenson M."/>
            <person name="Grisanti P."/>
            <person name="Grivell L.A."/>
            <person name="de Haan M."/>
            <person name="Haasemann M."/>
            <person name="Hatat D."/>
            <person name="Hoenicka J."/>
            <person name="Hegemann J.H."/>
            <person name="Herbert C.J."/>
            <person name="Hilger F."/>
            <person name="Hohmann S."/>
            <person name="Hollenberg C.P."/>
            <person name="Huse K."/>
            <person name="Iborra F."/>
            <person name="Indge K.J."/>
            <person name="Isono K."/>
            <person name="Jacq C."/>
            <person name="Jacquet M."/>
            <person name="James C.M."/>
            <person name="Jauniaux J.-C."/>
            <person name="Jia Y."/>
            <person name="Jimenez A."/>
            <person name="Kelly A."/>
            <person name="Kleinhans U."/>
            <person name="Kreisl P."/>
            <person name="Lanfranchi G."/>
            <person name="Lewis C."/>
            <person name="van der Linden C.G."/>
            <person name="Lucchini G."/>
            <person name="Lutzenkirchen K."/>
            <person name="Maat M.J."/>
            <person name="Mallet L."/>
            <person name="Mannhaupt G."/>
            <person name="Martegani E."/>
            <person name="Mathieu A."/>
            <person name="Maurer C.T.C."/>
            <person name="McConnell D."/>
            <person name="McKee R.A."/>
            <person name="Messenguy F."/>
            <person name="Mewes H.-W."/>
            <person name="Molemans F."/>
            <person name="Montague M.A."/>
            <person name="Muzi Falconi M."/>
            <person name="Navas L."/>
            <person name="Newlon C.S."/>
            <person name="Noone D."/>
            <person name="Pallier C."/>
            <person name="Panzeri L."/>
            <person name="Pearson B.M."/>
            <person name="Perea J."/>
            <person name="Philippsen P."/>
            <person name="Pierard A."/>
            <person name="Planta R.J."/>
            <person name="Plevani P."/>
            <person name="Poetsch B."/>
            <person name="Pohl F.M."/>
            <person name="Purnelle B."/>
            <person name="Ramezani Rad M."/>
            <person name="Rasmussen S.W."/>
            <person name="Raynal A."/>
            <person name="Remacha M.A."/>
            <person name="Richterich P."/>
            <person name="Roberts A.B."/>
            <person name="Rodriguez F."/>
            <person name="Sanz E."/>
            <person name="Schaaff-Gerstenschlaeger I."/>
            <person name="Scherens B."/>
            <person name="Schweitzer B."/>
            <person name="Shu Y."/>
            <person name="Skala J."/>
            <person name="Slonimski P.P."/>
            <person name="Sor F."/>
            <person name="Soustelle C."/>
            <person name="Spiegelberg R."/>
            <person name="Stateva L.I."/>
            <person name="Steensma H.Y."/>
            <person name="Steiner S."/>
            <person name="Thierry A."/>
            <person name="Thireos G."/>
            <person name="Tzermia M."/>
            <person name="Urrestarazu L.A."/>
            <person name="Valle G."/>
            <person name="Vetter I."/>
            <person name="van Vliet-Reedijk J.C."/>
            <person name="Voet M."/>
            <person name="Volckaert G."/>
            <person name="Vreken P."/>
            <person name="Wang H."/>
            <person name="Warmington J.R."/>
            <person name="von Wettstein D."/>
            <person name="Wicksteed B.L."/>
            <person name="Wilson C."/>
            <person name="Wurst H."/>
            <person name="Xu G."/>
            <person name="Yoshikawa A."/>
            <person name="Zimmermann F.K."/>
            <person name="Sgouros J.G."/>
        </authorList>
    </citation>
    <scope>NUCLEOTIDE SEQUENCE [LARGE SCALE GENOMIC DNA]</scope>
    <source>
        <strain>ATCC 204508 / S288c</strain>
    </source>
</reference>
<reference key="2">
    <citation type="journal article" date="2014" name="G3 (Bethesda)">
        <title>The reference genome sequence of Saccharomyces cerevisiae: Then and now.</title>
        <authorList>
            <person name="Engel S.R."/>
            <person name="Dietrich F.S."/>
            <person name="Fisk D.G."/>
            <person name="Binkley G."/>
            <person name="Balakrishnan R."/>
            <person name="Costanzo M.C."/>
            <person name="Dwight S.S."/>
            <person name="Hitz B.C."/>
            <person name="Karra K."/>
            <person name="Nash R.S."/>
            <person name="Weng S."/>
            <person name="Wong E.D."/>
            <person name="Lloyd P."/>
            <person name="Skrzypek M.S."/>
            <person name="Miyasato S.R."/>
            <person name="Simison M."/>
            <person name="Cherry J.M."/>
        </authorList>
    </citation>
    <scope>GENOME REANNOTATION</scope>
    <source>
        <strain>ATCC 204508 / S288c</strain>
    </source>
</reference>
<reference key="3">
    <citation type="journal article" date="2000" name="FEBS Lett.">
        <title>Genomic exploration of the hemiascomycetous yeasts: 4. The genome of Saccharomyces cerevisiae revisited.</title>
        <authorList>
            <person name="Blandin G."/>
            <person name="Durrens P."/>
            <person name="Tekaia F."/>
            <person name="Aigle M."/>
            <person name="Bolotin-Fukuhara M."/>
            <person name="Bon E."/>
            <person name="Casaregola S."/>
            <person name="de Montigny J."/>
            <person name="Gaillardin C."/>
            <person name="Lepingle A."/>
            <person name="Llorente B."/>
            <person name="Malpertuy A."/>
            <person name="Neuveglise C."/>
            <person name="Ozier-Kalogeropoulos O."/>
            <person name="Perrin A."/>
            <person name="Potier S."/>
            <person name="Souciet J.-L."/>
            <person name="Talla E."/>
            <person name="Toffano-Nioche C."/>
            <person name="Wesolowski-Louvel M."/>
            <person name="Marck C."/>
            <person name="Dujon B."/>
        </authorList>
    </citation>
    <scope>GENOME REANNOTATION</scope>
</reference>
<dbReference type="EMBL" id="X59720">
    <property type="protein sequence ID" value="CAC42992.1"/>
    <property type="molecule type" value="Genomic_DNA"/>
</dbReference>
<dbReference type="STRING" id="4932.YCR097W-A"/>
<dbReference type="PaxDb" id="4932-YCR097W-A"/>
<dbReference type="EnsemblFungi" id="YCR097W-A_mRNA">
    <property type="protein sequence ID" value="YCR097W-A"/>
    <property type="gene ID" value="YCR097W-A"/>
</dbReference>
<dbReference type="AGR" id="SGD:S000007632"/>
<dbReference type="SGD" id="S000007632">
    <property type="gene designation" value="YCR097W-A"/>
</dbReference>
<dbReference type="GeneTree" id="ENSGT00940000179575"/>
<dbReference type="HOGENOM" id="CLU_190163_0_0_1"/>
<dbReference type="GO" id="GO:0016020">
    <property type="term" value="C:membrane"/>
    <property type="evidence" value="ECO:0007669"/>
    <property type="project" value="UniProtKB-SubCell"/>
</dbReference>
<gene>
    <name type="ordered locus">YCR097W-A</name>
</gene>
<name>YC097_YEAST</name>
<protein>
    <recommendedName>
        <fullName>Putative uncharacterized protein YCR097W-A</fullName>
    </recommendedName>
</protein>
<accession>Q96VG6</accession>
<feature type="chain" id="PRO_0000299840" description="Putative uncharacterized protein YCR097W-A">
    <location>
        <begin position="1"/>
        <end position="88"/>
    </location>
</feature>
<feature type="transmembrane region" description="Helical" evidence="1">
    <location>
        <begin position="27"/>
        <end position="46"/>
    </location>
</feature>
<feature type="transmembrane region" description="Helical" evidence="1">
    <location>
        <begin position="61"/>
        <end position="83"/>
    </location>
</feature>
<keyword id="KW-0472">Membrane</keyword>
<keyword id="KW-0812">Transmembrane</keyword>
<keyword id="KW-1133">Transmembrane helix</keyword>
<comment type="subcellular location">
    <subcellularLocation>
        <location evidence="2">Membrane</location>
        <topology evidence="2">Multi-pass membrane protein</topology>
    </subcellularLocation>
</comment>
<comment type="caution">
    <text evidence="3">Product of a dubious gene prediction unlikely to encode a functional protein. Because of that it is not part of the S.cerevisiae S288c complete/reference proteome set.</text>
</comment>
<proteinExistence type="uncertain"/>
<evidence type="ECO:0000255" key="1"/>
<evidence type="ECO:0000305" key="2"/>
<evidence type="ECO:0000305" key="3">
    <source>
    </source>
</evidence>